<gene>
    <name type="ordered locus">MmarC7_1702</name>
</gene>
<keyword id="KW-0238">DNA-binding</keyword>
<keyword id="KW-0804">Transcription</keyword>
<keyword id="KW-0805">Transcription regulation</keyword>
<feature type="chain" id="PRO_1000082410" description="Putative HTH-type transcriptional regulatory protein MmarC7_1702">
    <location>
        <begin position="1"/>
        <end position="326"/>
    </location>
</feature>
<feature type="domain" description="HTH cro/C1-type" evidence="1">
    <location>
        <begin position="128"/>
        <end position="183"/>
    </location>
</feature>
<feature type="DNA-binding region" description="H-T-H motif" evidence="1">
    <location>
        <begin position="139"/>
        <end position="158"/>
    </location>
</feature>
<dbReference type="EMBL" id="CP000745">
    <property type="protein sequence ID" value="ABR66758.1"/>
    <property type="molecule type" value="Genomic_DNA"/>
</dbReference>
<dbReference type="SMR" id="A6VJY2"/>
<dbReference type="STRING" id="426368.MmarC7_1702"/>
<dbReference type="KEGG" id="mmz:MmarC7_1702"/>
<dbReference type="eggNOG" id="arCOG04152">
    <property type="taxonomic scope" value="Archaea"/>
</dbReference>
<dbReference type="HOGENOM" id="CLU_075726_0_0_2"/>
<dbReference type="OrthoDB" id="31424at2157"/>
<dbReference type="GO" id="GO:0003677">
    <property type="term" value="F:DNA binding"/>
    <property type="evidence" value="ECO:0007669"/>
    <property type="project" value="UniProtKB-KW"/>
</dbReference>
<dbReference type="GO" id="GO:0003700">
    <property type="term" value="F:DNA-binding transcription factor activity"/>
    <property type="evidence" value="ECO:0007669"/>
    <property type="project" value="UniProtKB-UniRule"/>
</dbReference>
<dbReference type="CDD" id="cd00093">
    <property type="entry name" value="HTH_XRE"/>
    <property type="match status" value="1"/>
</dbReference>
<dbReference type="Gene3D" id="1.10.260.40">
    <property type="entry name" value="lambda repressor-like DNA-binding domains"/>
    <property type="match status" value="1"/>
</dbReference>
<dbReference type="HAMAP" id="MF_00584">
    <property type="entry name" value="HTH_type_cro_C1"/>
    <property type="match status" value="1"/>
</dbReference>
<dbReference type="InterPro" id="IPR020886">
    <property type="entry name" value="Arc_TR_HTH"/>
</dbReference>
<dbReference type="InterPro" id="IPR001387">
    <property type="entry name" value="Cro/C1-type_HTH"/>
</dbReference>
<dbReference type="InterPro" id="IPR010982">
    <property type="entry name" value="Lambda_DNA-bd_dom_sf"/>
</dbReference>
<dbReference type="NCBIfam" id="NF003162">
    <property type="entry name" value="PRK04140.1"/>
    <property type="match status" value="1"/>
</dbReference>
<dbReference type="Pfam" id="PF01381">
    <property type="entry name" value="HTH_3"/>
    <property type="match status" value="1"/>
</dbReference>
<dbReference type="SMART" id="SM00530">
    <property type="entry name" value="HTH_XRE"/>
    <property type="match status" value="1"/>
</dbReference>
<dbReference type="SUPFAM" id="SSF47413">
    <property type="entry name" value="lambda repressor-like DNA-binding domains"/>
    <property type="match status" value="1"/>
</dbReference>
<dbReference type="PROSITE" id="PS50943">
    <property type="entry name" value="HTH_CROC1"/>
    <property type="match status" value="1"/>
</dbReference>
<proteinExistence type="inferred from homology"/>
<organism>
    <name type="scientific">Methanococcus maripaludis (strain C7 / ATCC BAA-1331)</name>
    <dbReference type="NCBI Taxonomy" id="426368"/>
    <lineage>
        <taxon>Archaea</taxon>
        <taxon>Methanobacteriati</taxon>
        <taxon>Methanobacteriota</taxon>
        <taxon>Methanomada group</taxon>
        <taxon>Methanococci</taxon>
        <taxon>Methanococcales</taxon>
        <taxon>Methanococcaceae</taxon>
        <taxon>Methanococcus</taxon>
    </lineage>
</organism>
<evidence type="ECO:0000255" key="1">
    <source>
        <dbReference type="HAMAP-Rule" id="MF_00584"/>
    </source>
</evidence>
<sequence>MREVLLSECIDLLYESHFVISKPFGRSCFDLIAKKADLRFLIKILKNIDSLSTEQSEELLNIAKMLQAVPIIIGTRTRNSIMEEGAVYERYGIKAVTFNTFRDQLSGEPPVVYANRGGFFVNIDGAVLRETREKLKISVGELAEISRVSRKTIYKYEQNEANPSAEVAIKIEEYLDVPLIKGINIVDYMEGLKSQKSREEAFEKILKEGEDFKIRVIDILGDMGFNLLETTKAPFDAVAEESKSEDAENQNIIFTNIQETENEEIRRKAMIVDEISKMLNSHSLLVLEKKTNENKQITSMSISELEKIGDTVDLLEFIEKKKKSTK</sequence>
<reference key="1">
    <citation type="submission" date="2007-06" db="EMBL/GenBank/DDBJ databases">
        <title>Complete sequence of Methanococcus maripaludis C7.</title>
        <authorList>
            <consortium name="US DOE Joint Genome Institute"/>
            <person name="Copeland A."/>
            <person name="Lucas S."/>
            <person name="Lapidus A."/>
            <person name="Barry K."/>
            <person name="Glavina del Rio T."/>
            <person name="Dalin E."/>
            <person name="Tice H."/>
            <person name="Pitluck S."/>
            <person name="Clum A."/>
            <person name="Schmutz J."/>
            <person name="Larimer F."/>
            <person name="Land M."/>
            <person name="Hauser L."/>
            <person name="Kyrpides N."/>
            <person name="Anderson I."/>
            <person name="Sieprawska-Lupa M."/>
            <person name="Whitman W.B."/>
            <person name="Richardson P."/>
        </authorList>
    </citation>
    <scope>NUCLEOTIDE SEQUENCE [LARGE SCALE GENOMIC DNA]</scope>
    <source>
        <strain>C7 / ATCC BAA-1331</strain>
    </source>
</reference>
<accession>A6VJY2</accession>
<name>Y1702_METM7</name>
<protein>
    <recommendedName>
        <fullName evidence="1">Putative HTH-type transcriptional regulatory protein MmarC7_1702</fullName>
    </recommendedName>
</protein>